<sequence length="223" mass="24437">MKIFLDTANIDEIRTGVNWGIVDGVTTNPTLISKEAVNGKKYGDIIREILKIVDGPVSVEVVSTKYEGMVEEARKIHGLGDNAVVKIPMTEDGLRAIKTLSSEHINTNCTLVFNPIQALLAAKAGATYVSPFVGRLDDIGEDGMQIIDMIRTIFNNYIIKTQILVASIRNPIHVLRSAVIGADVVTVPFNVLKSLMKHPKTDEGLAKFLEDWKKVSPDGKLIL</sequence>
<evidence type="ECO:0000250" key="1"/>
<evidence type="ECO:0000305" key="2"/>
<evidence type="ECO:0007829" key="3">
    <source>
        <dbReference type="PDB" id="6YR3"/>
    </source>
</evidence>
<name>TAL_THEAC</name>
<comment type="function">
    <text evidence="1">Transaldolase is important for the balance of metabolites in the pentose-phosphate pathway.</text>
</comment>
<comment type="catalytic activity">
    <reaction>
        <text>D-sedoheptulose 7-phosphate + D-glyceraldehyde 3-phosphate = D-erythrose 4-phosphate + beta-D-fructose 6-phosphate</text>
        <dbReference type="Rhea" id="RHEA:17053"/>
        <dbReference type="ChEBI" id="CHEBI:16897"/>
        <dbReference type="ChEBI" id="CHEBI:57483"/>
        <dbReference type="ChEBI" id="CHEBI:57634"/>
        <dbReference type="ChEBI" id="CHEBI:59776"/>
        <dbReference type="EC" id="2.2.1.2"/>
    </reaction>
</comment>
<comment type="pathway">
    <text>Carbohydrate degradation; pentose phosphate pathway; D-glyceraldehyde 3-phosphate and beta-D-fructose 6-phosphate from D-ribose 5-phosphate and D-xylulose 5-phosphate (non-oxidative stage): step 2/3.</text>
</comment>
<comment type="subcellular location">
    <subcellularLocation>
        <location evidence="1">Cytoplasm</location>
    </subcellularLocation>
</comment>
<comment type="similarity">
    <text evidence="2">Belongs to the transaldolase family. Type 3B subfamily.</text>
</comment>
<keyword id="KW-0002">3D-structure</keyword>
<keyword id="KW-0963">Cytoplasm</keyword>
<keyword id="KW-0570">Pentose shunt</keyword>
<keyword id="KW-1185">Reference proteome</keyword>
<keyword id="KW-0704">Schiff base</keyword>
<keyword id="KW-0808">Transferase</keyword>
<gene>
    <name type="primary">tal</name>
    <name type="ordered locus">Ta0616</name>
</gene>
<protein>
    <recommendedName>
        <fullName>Probable transaldolase</fullName>
        <ecNumber>2.2.1.2</ecNumber>
    </recommendedName>
</protein>
<dbReference type="EC" id="2.2.1.2"/>
<dbReference type="EMBL" id="AL445064">
    <property type="protein sequence ID" value="CAC11755.1"/>
    <property type="molecule type" value="Genomic_DNA"/>
</dbReference>
<dbReference type="RefSeq" id="WP_010901039.1">
    <property type="nucleotide sequence ID" value="NC_002578.1"/>
</dbReference>
<dbReference type="PDB" id="3S0C">
    <property type="method" value="X-ray"/>
    <property type="resolution" value="1.78 A"/>
    <property type="chains" value="A/B/C/D/E=1-223"/>
</dbReference>
<dbReference type="PDB" id="3S1U">
    <property type="method" value="X-ray"/>
    <property type="resolution" value="1.90 A"/>
    <property type="chains" value="A/B/C/D/E=1-223"/>
</dbReference>
<dbReference type="PDB" id="3S1V">
    <property type="method" value="X-ray"/>
    <property type="resolution" value="1.80 A"/>
    <property type="chains" value="A/B/C/D/E=1-223"/>
</dbReference>
<dbReference type="PDB" id="3S1W">
    <property type="method" value="X-ray"/>
    <property type="resolution" value="1.80 A"/>
    <property type="chains" value="A/B/C/D/E=1-223"/>
</dbReference>
<dbReference type="PDB" id="3S1X">
    <property type="method" value="X-ray"/>
    <property type="resolution" value="1.65 A"/>
    <property type="chains" value="A/B/C/D/E=1-223"/>
</dbReference>
<dbReference type="PDB" id="4XZ9">
    <property type="method" value="X-ray"/>
    <property type="resolution" value="1.80 A"/>
    <property type="chains" value="A/B/C/D/E=1-223"/>
</dbReference>
<dbReference type="PDB" id="6YR3">
    <property type="method" value="X-ray"/>
    <property type="resolution" value="1.48 A"/>
    <property type="chains" value="A/B/C/D/E=1-223"/>
</dbReference>
<dbReference type="PDB" id="6YRE">
    <property type="method" value="X-ray"/>
    <property type="resolution" value="1.96 A"/>
    <property type="chains" value="A/B/C/D/E=1-223"/>
</dbReference>
<dbReference type="PDB" id="6YRH">
    <property type="method" value="X-ray"/>
    <property type="resolution" value="1.80 A"/>
    <property type="chains" value="A/B/C/D/E=1-223"/>
</dbReference>
<dbReference type="PDB" id="6YRM">
    <property type="method" value="X-ray"/>
    <property type="resolution" value="1.70 A"/>
    <property type="chains" value="A/B/C/D/E=1-223"/>
</dbReference>
<dbReference type="PDB" id="6YRT">
    <property type="method" value="X-ray"/>
    <property type="resolution" value="1.65 A"/>
    <property type="chains" value="A/B/C/D/E=1-223"/>
</dbReference>
<dbReference type="PDB" id="6YS0">
    <property type="method" value="X-ray"/>
    <property type="resolution" value="1.70 A"/>
    <property type="chains" value="A/B/C/D/E=1-223"/>
</dbReference>
<dbReference type="PDBsum" id="3S0C"/>
<dbReference type="PDBsum" id="3S1U"/>
<dbReference type="PDBsum" id="3S1V"/>
<dbReference type="PDBsum" id="3S1W"/>
<dbReference type="PDBsum" id="3S1X"/>
<dbReference type="PDBsum" id="4XZ9"/>
<dbReference type="PDBsum" id="6YR3"/>
<dbReference type="PDBsum" id="6YRE"/>
<dbReference type="PDBsum" id="6YRH"/>
<dbReference type="PDBsum" id="6YRM"/>
<dbReference type="PDBsum" id="6YRT"/>
<dbReference type="PDBsum" id="6YS0"/>
<dbReference type="SMR" id="Q9HKI3"/>
<dbReference type="STRING" id="273075.gene:9571835"/>
<dbReference type="PaxDb" id="273075-Ta0616"/>
<dbReference type="EnsemblBacteria" id="CAC11755">
    <property type="protein sequence ID" value="CAC11755"/>
    <property type="gene ID" value="CAC11755"/>
</dbReference>
<dbReference type="KEGG" id="tac:Ta0616"/>
<dbReference type="eggNOG" id="arCOG05061">
    <property type="taxonomic scope" value="Archaea"/>
</dbReference>
<dbReference type="HOGENOM" id="CLU_079764_0_0_2"/>
<dbReference type="InParanoid" id="Q9HKI3"/>
<dbReference type="OrthoDB" id="6661at2157"/>
<dbReference type="BRENDA" id="2.2.1.2">
    <property type="organism ID" value="6324"/>
</dbReference>
<dbReference type="UniPathway" id="UPA00115">
    <property type="reaction ID" value="UER00414"/>
</dbReference>
<dbReference type="EvolutionaryTrace" id="Q9HKI3"/>
<dbReference type="Proteomes" id="UP000001024">
    <property type="component" value="Chromosome"/>
</dbReference>
<dbReference type="GO" id="GO:0005737">
    <property type="term" value="C:cytoplasm"/>
    <property type="evidence" value="ECO:0007669"/>
    <property type="project" value="UniProtKB-SubCell"/>
</dbReference>
<dbReference type="GO" id="GO:0016832">
    <property type="term" value="F:aldehyde-lyase activity"/>
    <property type="evidence" value="ECO:0007669"/>
    <property type="project" value="InterPro"/>
</dbReference>
<dbReference type="GO" id="GO:0004801">
    <property type="term" value="F:transaldolase activity"/>
    <property type="evidence" value="ECO:0007669"/>
    <property type="project" value="UniProtKB-UniRule"/>
</dbReference>
<dbReference type="GO" id="GO:0005975">
    <property type="term" value="P:carbohydrate metabolic process"/>
    <property type="evidence" value="ECO:0007669"/>
    <property type="project" value="InterPro"/>
</dbReference>
<dbReference type="GO" id="GO:0006098">
    <property type="term" value="P:pentose-phosphate shunt"/>
    <property type="evidence" value="ECO:0007669"/>
    <property type="project" value="UniProtKB-UniRule"/>
</dbReference>
<dbReference type="CDD" id="cd00956">
    <property type="entry name" value="Transaldolase_FSA"/>
    <property type="match status" value="1"/>
</dbReference>
<dbReference type="FunFam" id="3.20.20.70:FF:000018">
    <property type="entry name" value="Probable transaldolase"/>
    <property type="match status" value="1"/>
</dbReference>
<dbReference type="Gene3D" id="3.20.20.70">
    <property type="entry name" value="Aldolase class I"/>
    <property type="match status" value="1"/>
</dbReference>
<dbReference type="HAMAP" id="MF_00494">
    <property type="entry name" value="Transaldolase_3b"/>
    <property type="match status" value="1"/>
</dbReference>
<dbReference type="InterPro" id="IPR013785">
    <property type="entry name" value="Aldolase_TIM"/>
</dbReference>
<dbReference type="InterPro" id="IPR001585">
    <property type="entry name" value="TAL/FSA"/>
</dbReference>
<dbReference type="InterPro" id="IPR022999">
    <property type="entry name" value="Transaldolase_3B"/>
</dbReference>
<dbReference type="InterPro" id="IPR004731">
    <property type="entry name" value="Transaldolase_3B/F6P_aldolase"/>
</dbReference>
<dbReference type="InterPro" id="IPR018225">
    <property type="entry name" value="Transaldolase_AS"/>
</dbReference>
<dbReference type="InterPro" id="IPR033919">
    <property type="entry name" value="TSA/FSA_arc/bac"/>
</dbReference>
<dbReference type="NCBIfam" id="TIGR00875">
    <property type="entry name" value="fsa_talC_mipB"/>
    <property type="match status" value="1"/>
</dbReference>
<dbReference type="PANTHER" id="PTHR10683:SF40">
    <property type="entry name" value="FRUCTOSE-6-PHOSPHATE ALDOLASE 1-RELATED"/>
    <property type="match status" value="1"/>
</dbReference>
<dbReference type="PANTHER" id="PTHR10683">
    <property type="entry name" value="TRANSALDOLASE"/>
    <property type="match status" value="1"/>
</dbReference>
<dbReference type="Pfam" id="PF00923">
    <property type="entry name" value="TAL_FSA"/>
    <property type="match status" value="1"/>
</dbReference>
<dbReference type="SUPFAM" id="SSF51569">
    <property type="entry name" value="Aldolase"/>
    <property type="match status" value="1"/>
</dbReference>
<dbReference type="PROSITE" id="PS01054">
    <property type="entry name" value="TRANSALDOLASE_1"/>
    <property type="match status" value="1"/>
</dbReference>
<dbReference type="PROSITE" id="PS00958">
    <property type="entry name" value="TRANSALDOLASE_2"/>
    <property type="match status" value="1"/>
</dbReference>
<organism>
    <name type="scientific">Thermoplasma acidophilum (strain ATCC 25905 / DSM 1728 / JCM 9062 / NBRC 15155 / AMRC-C165)</name>
    <dbReference type="NCBI Taxonomy" id="273075"/>
    <lineage>
        <taxon>Archaea</taxon>
        <taxon>Methanobacteriati</taxon>
        <taxon>Thermoplasmatota</taxon>
        <taxon>Thermoplasmata</taxon>
        <taxon>Thermoplasmatales</taxon>
        <taxon>Thermoplasmataceae</taxon>
        <taxon>Thermoplasma</taxon>
    </lineage>
</organism>
<feature type="chain" id="PRO_0000173691" description="Probable transaldolase">
    <location>
        <begin position="1"/>
        <end position="223"/>
    </location>
</feature>
<feature type="active site" description="Schiff-base intermediate with substrate" evidence="1">
    <location>
        <position position="86"/>
    </location>
</feature>
<feature type="strand" evidence="3">
    <location>
        <begin position="2"/>
        <end position="6"/>
    </location>
</feature>
<feature type="helix" evidence="3">
    <location>
        <begin position="10"/>
        <end position="19"/>
    </location>
</feature>
<feature type="strand" evidence="3">
    <location>
        <begin position="24"/>
        <end position="26"/>
    </location>
</feature>
<feature type="helix" evidence="3">
    <location>
        <begin position="29"/>
        <end position="35"/>
    </location>
</feature>
<feature type="helix" evidence="3">
    <location>
        <begin position="42"/>
        <end position="52"/>
    </location>
</feature>
<feature type="strand" evidence="3">
    <location>
        <begin position="57"/>
        <end position="60"/>
    </location>
</feature>
<feature type="helix" evidence="3">
    <location>
        <begin position="66"/>
        <end position="78"/>
    </location>
</feature>
<feature type="strand" evidence="3">
    <location>
        <begin position="83"/>
        <end position="90"/>
    </location>
</feature>
<feature type="helix" evidence="3">
    <location>
        <begin position="91"/>
        <end position="102"/>
    </location>
</feature>
<feature type="strand" evidence="3">
    <location>
        <begin position="107"/>
        <end position="112"/>
    </location>
</feature>
<feature type="helix" evidence="3">
    <location>
        <begin position="115"/>
        <end position="123"/>
    </location>
</feature>
<feature type="strand" evidence="3">
    <location>
        <begin position="127"/>
        <end position="132"/>
    </location>
</feature>
<feature type="helix" evidence="3">
    <location>
        <begin position="133"/>
        <end position="138"/>
    </location>
</feature>
<feature type="helix" evidence="3">
    <location>
        <begin position="144"/>
        <end position="157"/>
    </location>
</feature>
<feature type="strand" evidence="3">
    <location>
        <begin position="161"/>
        <end position="167"/>
    </location>
</feature>
<feature type="helix" evidence="3">
    <location>
        <begin position="171"/>
        <end position="180"/>
    </location>
</feature>
<feature type="strand" evidence="3">
    <location>
        <begin position="183"/>
        <end position="187"/>
    </location>
</feature>
<feature type="helix" evidence="3">
    <location>
        <begin position="189"/>
        <end position="195"/>
    </location>
</feature>
<feature type="helix" evidence="3">
    <location>
        <begin position="199"/>
        <end position="215"/>
    </location>
</feature>
<proteinExistence type="evidence at protein level"/>
<reference key="1">
    <citation type="journal article" date="2000" name="Nature">
        <title>The genome sequence of the thermoacidophilic scavenger Thermoplasma acidophilum.</title>
        <authorList>
            <person name="Ruepp A."/>
            <person name="Graml W."/>
            <person name="Santos-Martinez M.-L."/>
            <person name="Koretke K.K."/>
            <person name="Volker C."/>
            <person name="Mewes H.-W."/>
            <person name="Frishman D."/>
            <person name="Stocker S."/>
            <person name="Lupas A.N."/>
            <person name="Baumeister W."/>
        </authorList>
    </citation>
    <scope>NUCLEOTIDE SEQUENCE [LARGE SCALE GENOMIC DNA]</scope>
    <source>
        <strain>ATCC 25905 / DSM 1728 / JCM 9062 / NBRC 15155 / AMRC-C165</strain>
    </source>
</reference>
<accession>Q9HKI3</accession>